<proteinExistence type="inferred from homology"/>
<sequence>MGPVMLDVEGYELDAEEREILAHPLVGGLILFTRNYHDPAQLRELVRQIRAASRNHLVVAVDQEGGRVQRFREGFTRLPAAQSFAALLGMEEGGKLAQEAGWLMASEMIAMDIDISFAPVLDVGHISAAIGERSYHADPEKALAIASRFIDGMHEAGMKTTGKHFPGHGAVTADSHKETPCDPRPQAEIRAKDMSVFSTLIRENKLDAIMPAHVIYSDVDPRPASGSSYWLKTVLRQELGFDGVIFSDDLSMEGAAIMGSYAERGQASLDAGCDMILVCNNRKGAVSVLDNLSPIKAERVTRLYHKGSFSRQELMDSARWKAISARLNQLHERWQEEKAGH</sequence>
<dbReference type="EC" id="3.2.1.52" evidence="1"/>
<dbReference type="EMBL" id="CP000034">
    <property type="protein sequence ID" value="ABB62138.1"/>
    <property type="molecule type" value="Genomic_DNA"/>
</dbReference>
<dbReference type="RefSeq" id="WP_000529291.1">
    <property type="nucleotide sequence ID" value="NC_007606.1"/>
</dbReference>
<dbReference type="RefSeq" id="YP_403629.1">
    <property type="nucleotide sequence ID" value="NC_007606.1"/>
</dbReference>
<dbReference type="SMR" id="Q32EW7"/>
<dbReference type="STRING" id="300267.SDY_2043"/>
<dbReference type="CAZy" id="GH3">
    <property type="family name" value="Glycoside Hydrolase Family 3"/>
</dbReference>
<dbReference type="EnsemblBacteria" id="ABB62138">
    <property type="protein sequence ID" value="ABB62138"/>
    <property type="gene ID" value="SDY_2043"/>
</dbReference>
<dbReference type="KEGG" id="sdy:SDY_2043"/>
<dbReference type="PATRIC" id="fig|300267.13.peg.2457"/>
<dbReference type="HOGENOM" id="CLU_008392_0_0_6"/>
<dbReference type="UniPathway" id="UPA00544"/>
<dbReference type="Proteomes" id="UP000002716">
    <property type="component" value="Chromosome"/>
</dbReference>
<dbReference type="GO" id="GO:0005737">
    <property type="term" value="C:cytoplasm"/>
    <property type="evidence" value="ECO:0007669"/>
    <property type="project" value="UniProtKB-SubCell"/>
</dbReference>
<dbReference type="GO" id="GO:0004563">
    <property type="term" value="F:beta-N-acetylhexosaminidase activity"/>
    <property type="evidence" value="ECO:0007669"/>
    <property type="project" value="UniProtKB-UniRule"/>
</dbReference>
<dbReference type="GO" id="GO:0005975">
    <property type="term" value="P:carbohydrate metabolic process"/>
    <property type="evidence" value="ECO:0007669"/>
    <property type="project" value="InterPro"/>
</dbReference>
<dbReference type="GO" id="GO:0051301">
    <property type="term" value="P:cell division"/>
    <property type="evidence" value="ECO:0007669"/>
    <property type="project" value="UniProtKB-KW"/>
</dbReference>
<dbReference type="GO" id="GO:0071555">
    <property type="term" value="P:cell wall organization"/>
    <property type="evidence" value="ECO:0007669"/>
    <property type="project" value="UniProtKB-KW"/>
</dbReference>
<dbReference type="GO" id="GO:0009252">
    <property type="term" value="P:peptidoglycan biosynthetic process"/>
    <property type="evidence" value="ECO:0007669"/>
    <property type="project" value="UniProtKB-KW"/>
</dbReference>
<dbReference type="GO" id="GO:0009254">
    <property type="term" value="P:peptidoglycan turnover"/>
    <property type="evidence" value="ECO:0007669"/>
    <property type="project" value="UniProtKB-UniRule"/>
</dbReference>
<dbReference type="GO" id="GO:0008360">
    <property type="term" value="P:regulation of cell shape"/>
    <property type="evidence" value="ECO:0007669"/>
    <property type="project" value="UniProtKB-KW"/>
</dbReference>
<dbReference type="FunFam" id="3.20.20.300:FF:000001">
    <property type="entry name" value="Beta-hexosaminidase"/>
    <property type="match status" value="1"/>
</dbReference>
<dbReference type="Gene3D" id="3.20.20.300">
    <property type="entry name" value="Glycoside hydrolase, family 3, N-terminal domain"/>
    <property type="match status" value="1"/>
</dbReference>
<dbReference type="HAMAP" id="MF_00364">
    <property type="entry name" value="NagZ"/>
    <property type="match status" value="1"/>
</dbReference>
<dbReference type="InterPro" id="IPR022956">
    <property type="entry name" value="Beta_hexosaminidase_bac"/>
</dbReference>
<dbReference type="InterPro" id="IPR019800">
    <property type="entry name" value="Glyco_hydro_3_AS"/>
</dbReference>
<dbReference type="InterPro" id="IPR001764">
    <property type="entry name" value="Glyco_hydro_3_N"/>
</dbReference>
<dbReference type="InterPro" id="IPR036962">
    <property type="entry name" value="Glyco_hydro_3_N_sf"/>
</dbReference>
<dbReference type="InterPro" id="IPR017853">
    <property type="entry name" value="Glycoside_hydrolase_SF"/>
</dbReference>
<dbReference type="InterPro" id="IPR050226">
    <property type="entry name" value="NagZ_Beta-hexosaminidase"/>
</dbReference>
<dbReference type="NCBIfam" id="NF003740">
    <property type="entry name" value="PRK05337.1"/>
    <property type="match status" value="1"/>
</dbReference>
<dbReference type="PANTHER" id="PTHR30480:SF13">
    <property type="entry name" value="BETA-HEXOSAMINIDASE"/>
    <property type="match status" value="1"/>
</dbReference>
<dbReference type="PANTHER" id="PTHR30480">
    <property type="entry name" value="BETA-HEXOSAMINIDASE-RELATED"/>
    <property type="match status" value="1"/>
</dbReference>
<dbReference type="Pfam" id="PF00933">
    <property type="entry name" value="Glyco_hydro_3"/>
    <property type="match status" value="1"/>
</dbReference>
<dbReference type="SUPFAM" id="SSF51445">
    <property type="entry name" value="(Trans)glycosidases"/>
    <property type="match status" value="1"/>
</dbReference>
<dbReference type="PROSITE" id="PS00775">
    <property type="entry name" value="GLYCOSYL_HYDROL_F3"/>
    <property type="match status" value="1"/>
</dbReference>
<comment type="function">
    <text evidence="1">Plays a role in peptidoglycan recycling by cleaving the terminal beta-1,4-linked N-acetylglucosamine (GlcNAc) from peptide-linked peptidoglycan fragments, giving rise to free GlcNAc, anhydro-N-acetylmuramic acid and anhydro-N-acetylmuramic acid-linked peptides.</text>
</comment>
<comment type="catalytic activity">
    <reaction evidence="1">
        <text>Hydrolysis of terminal non-reducing N-acetyl-D-hexosamine residues in N-acetyl-beta-D-hexosaminides.</text>
        <dbReference type="EC" id="3.2.1.52"/>
    </reaction>
</comment>
<comment type="pathway">
    <text evidence="1">Cell wall biogenesis; peptidoglycan recycling.</text>
</comment>
<comment type="subcellular location">
    <subcellularLocation>
        <location evidence="1">Cytoplasm</location>
    </subcellularLocation>
</comment>
<comment type="similarity">
    <text evidence="1">Belongs to the glycosyl hydrolase 3 family. NagZ subfamily.</text>
</comment>
<feature type="chain" id="PRO_0000234924" description="Beta-hexosaminidase">
    <location>
        <begin position="1"/>
        <end position="341"/>
    </location>
</feature>
<feature type="active site" description="Proton donor/acceptor" evidence="1">
    <location>
        <position position="176"/>
    </location>
</feature>
<feature type="active site" description="Nucleophile" evidence="1">
    <location>
        <position position="248"/>
    </location>
</feature>
<feature type="binding site" evidence="1">
    <location>
        <position position="62"/>
    </location>
    <ligand>
        <name>substrate</name>
    </ligand>
</feature>
<feature type="binding site" evidence="1">
    <location>
        <position position="70"/>
    </location>
    <ligand>
        <name>substrate</name>
    </ligand>
</feature>
<feature type="binding site" evidence="1">
    <location>
        <position position="133"/>
    </location>
    <ligand>
        <name>substrate</name>
    </ligand>
</feature>
<feature type="binding site" evidence="1">
    <location>
        <begin position="163"/>
        <end position="164"/>
    </location>
    <ligand>
        <name>substrate</name>
    </ligand>
</feature>
<feature type="site" description="Important for catalytic activity" evidence="1">
    <location>
        <position position="174"/>
    </location>
</feature>
<evidence type="ECO:0000255" key="1">
    <source>
        <dbReference type="HAMAP-Rule" id="MF_00364"/>
    </source>
</evidence>
<protein>
    <recommendedName>
        <fullName evidence="1">Beta-hexosaminidase</fullName>
        <ecNumber evidence="1">3.2.1.52</ecNumber>
    </recommendedName>
    <alternativeName>
        <fullName evidence="1">Beta-N-acetylhexosaminidase</fullName>
    </alternativeName>
    <alternativeName>
        <fullName evidence="1">N-acetyl-beta-glucosaminidase</fullName>
    </alternativeName>
</protein>
<name>NAGZ_SHIDS</name>
<gene>
    <name evidence="1" type="primary">nagZ</name>
    <name type="ordered locus">SDY_2043</name>
</gene>
<accession>Q32EW7</accession>
<reference key="1">
    <citation type="journal article" date="2005" name="Nucleic Acids Res.">
        <title>Genome dynamics and diversity of Shigella species, the etiologic agents of bacillary dysentery.</title>
        <authorList>
            <person name="Yang F."/>
            <person name="Yang J."/>
            <person name="Zhang X."/>
            <person name="Chen L."/>
            <person name="Jiang Y."/>
            <person name="Yan Y."/>
            <person name="Tang X."/>
            <person name="Wang J."/>
            <person name="Xiong Z."/>
            <person name="Dong J."/>
            <person name="Xue Y."/>
            <person name="Zhu Y."/>
            <person name="Xu X."/>
            <person name="Sun L."/>
            <person name="Chen S."/>
            <person name="Nie H."/>
            <person name="Peng J."/>
            <person name="Xu J."/>
            <person name="Wang Y."/>
            <person name="Yuan Z."/>
            <person name="Wen Y."/>
            <person name="Yao Z."/>
            <person name="Shen Y."/>
            <person name="Qiang B."/>
            <person name="Hou Y."/>
            <person name="Yu J."/>
            <person name="Jin Q."/>
        </authorList>
    </citation>
    <scope>NUCLEOTIDE SEQUENCE [LARGE SCALE GENOMIC DNA]</scope>
    <source>
        <strain>Sd197</strain>
    </source>
</reference>
<organism>
    <name type="scientific">Shigella dysenteriae serotype 1 (strain Sd197)</name>
    <dbReference type="NCBI Taxonomy" id="300267"/>
    <lineage>
        <taxon>Bacteria</taxon>
        <taxon>Pseudomonadati</taxon>
        <taxon>Pseudomonadota</taxon>
        <taxon>Gammaproteobacteria</taxon>
        <taxon>Enterobacterales</taxon>
        <taxon>Enterobacteriaceae</taxon>
        <taxon>Shigella</taxon>
    </lineage>
</organism>
<keyword id="KW-0131">Cell cycle</keyword>
<keyword id="KW-0132">Cell division</keyword>
<keyword id="KW-0133">Cell shape</keyword>
<keyword id="KW-0961">Cell wall biogenesis/degradation</keyword>
<keyword id="KW-0963">Cytoplasm</keyword>
<keyword id="KW-0326">Glycosidase</keyword>
<keyword id="KW-0378">Hydrolase</keyword>
<keyword id="KW-0573">Peptidoglycan synthesis</keyword>
<keyword id="KW-1185">Reference proteome</keyword>